<name>EXPB4_ORYSJ</name>
<accession>Q94LR4</accession>
<accession>A3C777</accession>
<accession>Q7XCA4</accession>
<accession>Q9LD10</accession>
<proteinExistence type="evidence at transcript level"/>
<reference key="1">
    <citation type="journal article" date="1997" name="Proc. Natl. Acad. Sci. U.S.A.">
        <title>Group I allergens of grass pollen as cell wall-loosening agents.</title>
        <authorList>
            <person name="Cosgrove D.J."/>
            <person name="Bedinger P.A."/>
            <person name="Durachko D.M."/>
        </authorList>
    </citation>
    <scope>NUCLEOTIDE SEQUENCE [MRNA]</scope>
</reference>
<reference key="2">
    <citation type="journal article" date="2003" name="Science">
        <title>In-depth view of structure, activity, and evolution of rice chromosome 10.</title>
        <authorList>
            <person name="Yu Y."/>
            <person name="Rambo T."/>
            <person name="Currie J."/>
            <person name="Saski C."/>
            <person name="Kim H.-R."/>
            <person name="Collura K."/>
            <person name="Thompson S."/>
            <person name="Simmons J."/>
            <person name="Yang T.-J."/>
            <person name="Nah G."/>
            <person name="Patel A.J."/>
            <person name="Thurmond S."/>
            <person name="Henry D."/>
            <person name="Oates R."/>
            <person name="Palmer M."/>
            <person name="Pries G."/>
            <person name="Gibson J."/>
            <person name="Anderson H."/>
            <person name="Paradkar M."/>
            <person name="Crane L."/>
            <person name="Dale J."/>
            <person name="Carver M.B."/>
            <person name="Wood T."/>
            <person name="Frisch D."/>
            <person name="Engler F."/>
            <person name="Soderlund C."/>
            <person name="Palmer L.E."/>
            <person name="Teytelman L."/>
            <person name="Nascimento L."/>
            <person name="De la Bastide M."/>
            <person name="Spiegel L."/>
            <person name="Ware D."/>
            <person name="O'Shaughnessy A."/>
            <person name="Dike S."/>
            <person name="Dedhia N."/>
            <person name="Preston R."/>
            <person name="Huang E."/>
            <person name="Ferraro K."/>
            <person name="Kuit K."/>
            <person name="Miller B."/>
            <person name="Zutavern T."/>
            <person name="Katzenberger F."/>
            <person name="Muller S."/>
            <person name="Balija V."/>
            <person name="Martienssen R.A."/>
            <person name="Stein L."/>
            <person name="Minx P."/>
            <person name="Johnson D."/>
            <person name="Cordum H."/>
            <person name="Mardis E."/>
            <person name="Cheng Z."/>
            <person name="Jiang J."/>
            <person name="Wilson R."/>
            <person name="McCombie W.R."/>
            <person name="Wing R.A."/>
            <person name="Yuan Q."/>
            <person name="Ouyang S."/>
            <person name="Liu J."/>
            <person name="Jones K.M."/>
            <person name="Gansberger K."/>
            <person name="Moffat K."/>
            <person name="Hill J."/>
            <person name="Tsitrin T."/>
            <person name="Overton L."/>
            <person name="Bera J."/>
            <person name="Kim M."/>
            <person name="Jin S."/>
            <person name="Tallon L."/>
            <person name="Ciecko A."/>
            <person name="Pai G."/>
            <person name="Van Aken S."/>
            <person name="Utterback T."/>
            <person name="Reidmuller S."/>
            <person name="Bormann J."/>
            <person name="Feldblyum T."/>
            <person name="Hsiao J."/>
            <person name="Zismann V."/>
            <person name="Blunt S."/>
            <person name="de Vazeille A.R."/>
            <person name="Shaffer T."/>
            <person name="Koo H."/>
            <person name="Suh B."/>
            <person name="Yang Q."/>
            <person name="Haas B."/>
            <person name="Peterson J."/>
            <person name="Pertea M."/>
            <person name="Volfovsky N."/>
            <person name="Wortman J."/>
            <person name="White O."/>
            <person name="Salzberg S.L."/>
            <person name="Fraser C.M."/>
            <person name="Buell C.R."/>
            <person name="Messing J."/>
            <person name="Song R."/>
            <person name="Fuks G."/>
            <person name="Llaca V."/>
            <person name="Kovchak S."/>
            <person name="Young S."/>
            <person name="Bowers J.E."/>
            <person name="Paterson A.H."/>
            <person name="Johns M.A."/>
            <person name="Mao L."/>
            <person name="Pan H."/>
            <person name="Dean R.A."/>
        </authorList>
    </citation>
    <scope>NUCLEOTIDE SEQUENCE [LARGE SCALE GENOMIC DNA]</scope>
    <source>
        <strain>cv. Nipponbare</strain>
    </source>
</reference>
<reference key="3">
    <citation type="journal article" date="2005" name="Nature">
        <title>The map-based sequence of the rice genome.</title>
        <authorList>
            <consortium name="International rice genome sequencing project (IRGSP)"/>
        </authorList>
    </citation>
    <scope>NUCLEOTIDE SEQUENCE [LARGE SCALE GENOMIC DNA]</scope>
    <source>
        <strain>cv. Nipponbare</strain>
    </source>
</reference>
<reference key="4">
    <citation type="journal article" date="2008" name="Nucleic Acids Res.">
        <title>The rice annotation project database (RAP-DB): 2008 update.</title>
        <authorList>
            <consortium name="The rice annotation project (RAP)"/>
        </authorList>
    </citation>
    <scope>GENOME REANNOTATION</scope>
    <source>
        <strain>cv. Nipponbare</strain>
    </source>
</reference>
<reference key="5">
    <citation type="journal article" date="2013" name="Rice">
        <title>Improvement of the Oryza sativa Nipponbare reference genome using next generation sequence and optical map data.</title>
        <authorList>
            <person name="Kawahara Y."/>
            <person name="de la Bastide M."/>
            <person name="Hamilton J.P."/>
            <person name="Kanamori H."/>
            <person name="McCombie W.R."/>
            <person name="Ouyang S."/>
            <person name="Schwartz D.C."/>
            <person name="Tanaka T."/>
            <person name="Wu J."/>
            <person name="Zhou S."/>
            <person name="Childs K.L."/>
            <person name="Davidson R.M."/>
            <person name="Lin H."/>
            <person name="Quesada-Ocampo L."/>
            <person name="Vaillancourt B."/>
            <person name="Sakai H."/>
            <person name="Lee S.S."/>
            <person name="Kim J."/>
            <person name="Numa H."/>
            <person name="Itoh T."/>
            <person name="Buell C.R."/>
            <person name="Matsumoto T."/>
        </authorList>
    </citation>
    <scope>GENOME REANNOTATION</scope>
    <source>
        <strain>cv. Nipponbare</strain>
    </source>
</reference>
<reference key="6">
    <citation type="journal article" date="2005" name="PLoS Biol.">
        <title>The genomes of Oryza sativa: a history of duplications.</title>
        <authorList>
            <person name="Yu J."/>
            <person name="Wang J."/>
            <person name="Lin W."/>
            <person name="Li S."/>
            <person name="Li H."/>
            <person name="Zhou J."/>
            <person name="Ni P."/>
            <person name="Dong W."/>
            <person name="Hu S."/>
            <person name="Zeng C."/>
            <person name="Zhang J."/>
            <person name="Zhang Y."/>
            <person name="Li R."/>
            <person name="Xu Z."/>
            <person name="Li S."/>
            <person name="Li X."/>
            <person name="Zheng H."/>
            <person name="Cong L."/>
            <person name="Lin L."/>
            <person name="Yin J."/>
            <person name="Geng J."/>
            <person name="Li G."/>
            <person name="Shi J."/>
            <person name="Liu J."/>
            <person name="Lv H."/>
            <person name="Li J."/>
            <person name="Wang J."/>
            <person name="Deng Y."/>
            <person name="Ran L."/>
            <person name="Shi X."/>
            <person name="Wang X."/>
            <person name="Wu Q."/>
            <person name="Li C."/>
            <person name="Ren X."/>
            <person name="Wang J."/>
            <person name="Wang X."/>
            <person name="Li D."/>
            <person name="Liu D."/>
            <person name="Zhang X."/>
            <person name="Ji Z."/>
            <person name="Zhao W."/>
            <person name="Sun Y."/>
            <person name="Zhang Z."/>
            <person name="Bao J."/>
            <person name="Han Y."/>
            <person name="Dong L."/>
            <person name="Ji J."/>
            <person name="Chen P."/>
            <person name="Wu S."/>
            <person name="Liu J."/>
            <person name="Xiao Y."/>
            <person name="Bu D."/>
            <person name="Tan J."/>
            <person name="Yang L."/>
            <person name="Ye C."/>
            <person name="Zhang J."/>
            <person name="Xu J."/>
            <person name="Zhou Y."/>
            <person name="Yu Y."/>
            <person name="Zhang B."/>
            <person name="Zhuang S."/>
            <person name="Wei H."/>
            <person name="Liu B."/>
            <person name="Lei M."/>
            <person name="Yu H."/>
            <person name="Li Y."/>
            <person name="Xu H."/>
            <person name="Wei S."/>
            <person name="He X."/>
            <person name="Fang L."/>
            <person name="Zhang Z."/>
            <person name="Zhang Y."/>
            <person name="Huang X."/>
            <person name="Su Z."/>
            <person name="Tong W."/>
            <person name="Li J."/>
            <person name="Tong Z."/>
            <person name="Li S."/>
            <person name="Ye J."/>
            <person name="Wang L."/>
            <person name="Fang L."/>
            <person name="Lei T."/>
            <person name="Chen C.-S."/>
            <person name="Chen H.-C."/>
            <person name="Xu Z."/>
            <person name="Li H."/>
            <person name="Huang H."/>
            <person name="Zhang F."/>
            <person name="Xu H."/>
            <person name="Li N."/>
            <person name="Zhao C."/>
            <person name="Li S."/>
            <person name="Dong L."/>
            <person name="Huang Y."/>
            <person name="Li L."/>
            <person name="Xi Y."/>
            <person name="Qi Q."/>
            <person name="Li W."/>
            <person name="Zhang B."/>
            <person name="Hu W."/>
            <person name="Zhang Y."/>
            <person name="Tian X."/>
            <person name="Jiao Y."/>
            <person name="Liang X."/>
            <person name="Jin J."/>
            <person name="Gao L."/>
            <person name="Zheng W."/>
            <person name="Hao B."/>
            <person name="Liu S.-M."/>
            <person name="Wang W."/>
            <person name="Yuan L."/>
            <person name="Cao M."/>
            <person name="McDermott J."/>
            <person name="Samudrala R."/>
            <person name="Wang J."/>
            <person name="Wong G.K.-S."/>
            <person name="Yang H."/>
        </authorList>
    </citation>
    <scope>NUCLEOTIDE SEQUENCE [LARGE SCALE GENOMIC DNA]</scope>
    <source>
        <strain>cv. Nipponbare</strain>
    </source>
</reference>
<reference key="7">
    <citation type="journal article" date="2003" name="Science">
        <title>Collection, mapping, and annotation of over 28,000 cDNA clones from japonica rice.</title>
        <authorList>
            <consortium name="The rice full-length cDNA consortium"/>
        </authorList>
    </citation>
    <scope>NUCLEOTIDE SEQUENCE [LARGE SCALE MRNA]</scope>
    <source>
        <strain>cv. Nipponbare</strain>
    </source>
</reference>
<reference key="8">
    <citation type="journal article" date="2001" name="Plant Physiol.">
        <title>Expression of beta-expansins is correlated with internodal elongation in deepwater rice.</title>
        <authorList>
            <person name="Lee Y."/>
            <person name="Kende H."/>
        </authorList>
    </citation>
    <scope>TISSUE SPECIFICITY</scope>
    <scope>INDUCTION</scope>
</reference>
<reference key="9">
    <citation type="journal article" date="2002" name="Plant Physiol.">
        <title>Expression of alpha-expansin and expansin-like genes in deepwater rice.</title>
        <authorList>
            <person name="Lee Y."/>
            <person name="Kende H."/>
        </authorList>
    </citation>
    <scope>DEVELOPMENTAL STAGE</scope>
</reference>
<reference key="10">
    <citation type="journal article" date="2004" name="Plant Mol. Biol.">
        <title>Nomenclature for members of the expansin superfamily of genes and proteins.</title>
        <authorList>
            <person name="Kende H."/>
            <person name="Bradford K.J."/>
            <person name="Brummell D.A."/>
            <person name="Cho H.-T."/>
            <person name="Cosgrove D.J."/>
            <person name="Fleming A.J."/>
            <person name="Gehring C."/>
            <person name="Lee Y."/>
            <person name="McQueen-Mason S.J."/>
            <person name="Rose J.K.C."/>
            <person name="Voesenek L.A.C."/>
        </authorList>
    </citation>
    <scope>NOMENCLATURE</scope>
</reference>
<feature type="signal peptide" evidence="2">
    <location>
        <begin position="1"/>
        <end position="24"/>
    </location>
</feature>
<feature type="chain" id="PRO_0000252015" description="Expansin-B4">
    <location>
        <begin position="25"/>
        <end position="286"/>
    </location>
</feature>
<feature type="domain" description="Expansin-like EG45" evidence="4">
    <location>
        <begin position="75"/>
        <end position="181"/>
    </location>
</feature>
<feature type="domain" description="Expansin-like CBD" evidence="3">
    <location>
        <begin position="194"/>
        <end position="281"/>
    </location>
</feature>
<feature type="glycosylation site" description="N-linked (GlcNAc...) asparagine" evidence="2">
    <location>
        <position position="28"/>
    </location>
</feature>
<feature type="glycosylation site" description="N-linked (GlcNAc...) asparagine" evidence="2">
    <location>
        <position position="44"/>
    </location>
</feature>
<feature type="glycosylation site" description="N-linked (GlcNAc...) asparagine" evidence="2">
    <location>
        <position position="257"/>
    </location>
</feature>
<feature type="disulfide bond" evidence="4">
    <location>
        <begin position="78"/>
        <end position="106"/>
    </location>
</feature>
<feature type="disulfide bond" evidence="4">
    <location>
        <begin position="109"/>
        <end position="176"/>
    </location>
</feature>
<feature type="disulfide bond" evidence="4">
    <location>
        <begin position="114"/>
        <end position="120"/>
    </location>
</feature>
<feature type="sequence conflict" description="In Ref. 1; AAF72985." evidence="7" ref="1">
    <original>V</original>
    <variation>W</variation>
    <location>
        <position position="41"/>
    </location>
</feature>
<feature type="sequence conflict" description="In Ref. 1; AAF72985." evidence="7" ref="1">
    <original>R</original>
    <variation>K</variation>
    <location>
        <position position="227"/>
    </location>
</feature>
<sequence>MGSLSSLAAAAVFLSLLAVGHCAAADFNATDADADFAGNGVDFNSSDAAVYWGPWTKARATWYGQPNGAGPDDNGGACGFKHTNQYPFMSMTSCGNQPLFKDGKGCGSCYKIRCTKDQSCSGRSETVIITDMNYYPVAPFHFDLSGTAFGRLAKPGLNDKLRHSGIIDIEFTRVPCEFPGLKIGFHVEEYSNPVYFAVLVEYEDGDGDVVQVDLMESKTAHGPPTGRWTPMRESWGSIWRLDTNHRLQAPFSIRIRNESGKTLVANNVIPANWRPNTFYRSFVQYS</sequence>
<organism>
    <name type="scientific">Oryza sativa subsp. japonica</name>
    <name type="common">Rice</name>
    <dbReference type="NCBI Taxonomy" id="39947"/>
    <lineage>
        <taxon>Eukaryota</taxon>
        <taxon>Viridiplantae</taxon>
        <taxon>Streptophyta</taxon>
        <taxon>Embryophyta</taxon>
        <taxon>Tracheophyta</taxon>
        <taxon>Spermatophyta</taxon>
        <taxon>Magnoliopsida</taxon>
        <taxon>Liliopsida</taxon>
        <taxon>Poales</taxon>
        <taxon>Poaceae</taxon>
        <taxon>BOP clade</taxon>
        <taxon>Oryzoideae</taxon>
        <taxon>Oryzeae</taxon>
        <taxon>Oryzinae</taxon>
        <taxon>Oryza</taxon>
        <taxon>Oryza sativa</taxon>
    </lineage>
</organism>
<dbReference type="EMBL" id="AF261272">
    <property type="protein sequence ID" value="AAF72985.1"/>
    <property type="molecule type" value="mRNA"/>
</dbReference>
<dbReference type="EMBL" id="AC069300">
    <property type="protein sequence ID" value="AAK55466.1"/>
    <property type="molecule type" value="Genomic_DNA"/>
</dbReference>
<dbReference type="EMBL" id="DP000086">
    <property type="protein sequence ID" value="AAP54970.1"/>
    <property type="molecule type" value="Genomic_DNA"/>
</dbReference>
<dbReference type="EMBL" id="AP008216">
    <property type="protein sequence ID" value="BAF27189.1"/>
    <property type="molecule type" value="Genomic_DNA"/>
</dbReference>
<dbReference type="EMBL" id="AP014966">
    <property type="protein sequence ID" value="BAT11997.1"/>
    <property type="molecule type" value="Genomic_DNA"/>
</dbReference>
<dbReference type="EMBL" id="CM000147">
    <property type="protein sequence ID" value="EAZ16940.1"/>
    <property type="molecule type" value="Genomic_DNA"/>
</dbReference>
<dbReference type="EMBL" id="AK101357">
    <property type="protein sequence ID" value="BAG95025.1"/>
    <property type="molecule type" value="mRNA"/>
</dbReference>
<dbReference type="EMBL" id="AK105981">
    <property type="protein sequence ID" value="BAG97481.1"/>
    <property type="molecule type" value="mRNA"/>
</dbReference>
<dbReference type="RefSeq" id="XP_015614992.1">
    <property type="nucleotide sequence ID" value="XM_015759506.1"/>
</dbReference>
<dbReference type="SMR" id="Q94LR4"/>
<dbReference type="FunCoup" id="Q94LR4">
    <property type="interactions" value="10"/>
</dbReference>
<dbReference type="STRING" id="39947.Q94LR4"/>
<dbReference type="GlyCosmos" id="Q94LR4">
    <property type="glycosylation" value="3 sites, No reported glycans"/>
</dbReference>
<dbReference type="PaxDb" id="39947-Q94LR4"/>
<dbReference type="EnsemblPlants" id="Os10t0556100-01">
    <property type="protein sequence ID" value="Os10t0556100-01"/>
    <property type="gene ID" value="Os10g0556100"/>
</dbReference>
<dbReference type="EnsemblPlants" id="Os10t0556100-02">
    <property type="protein sequence ID" value="Os10t0556100-02"/>
    <property type="gene ID" value="Os10g0556100"/>
</dbReference>
<dbReference type="Gramene" id="Os10t0556100-01">
    <property type="protein sequence ID" value="Os10t0556100-01"/>
    <property type="gene ID" value="Os10g0556100"/>
</dbReference>
<dbReference type="Gramene" id="Os10t0556100-02">
    <property type="protein sequence ID" value="Os10t0556100-02"/>
    <property type="gene ID" value="Os10g0556100"/>
</dbReference>
<dbReference type="KEGG" id="dosa:Os10g0556100"/>
<dbReference type="eggNOG" id="ENOG502R4J6">
    <property type="taxonomic scope" value="Eukaryota"/>
</dbReference>
<dbReference type="HOGENOM" id="CLU_027462_1_0_1"/>
<dbReference type="InParanoid" id="Q94LR4"/>
<dbReference type="OMA" id="HRMQAPF"/>
<dbReference type="OrthoDB" id="613806at2759"/>
<dbReference type="Proteomes" id="UP000000763">
    <property type="component" value="Chromosome 10"/>
</dbReference>
<dbReference type="Proteomes" id="UP000007752">
    <property type="component" value="Chromosome 10"/>
</dbReference>
<dbReference type="Proteomes" id="UP000059680">
    <property type="component" value="Chromosome 10"/>
</dbReference>
<dbReference type="ExpressionAtlas" id="Q94LR4">
    <property type="expression patterns" value="baseline and differential"/>
</dbReference>
<dbReference type="GO" id="GO:0005576">
    <property type="term" value="C:extracellular region"/>
    <property type="evidence" value="ECO:0007669"/>
    <property type="project" value="UniProtKB-KW"/>
</dbReference>
<dbReference type="GO" id="GO:0016020">
    <property type="term" value="C:membrane"/>
    <property type="evidence" value="ECO:0007669"/>
    <property type="project" value="UniProtKB-SubCell"/>
</dbReference>
<dbReference type="GO" id="GO:0009828">
    <property type="term" value="P:plant-type cell wall loosening"/>
    <property type="evidence" value="ECO:0000250"/>
    <property type="project" value="UniProtKB"/>
</dbReference>
<dbReference type="GO" id="GO:0019953">
    <property type="term" value="P:sexual reproduction"/>
    <property type="evidence" value="ECO:0007669"/>
    <property type="project" value="InterPro"/>
</dbReference>
<dbReference type="CDD" id="cd22275">
    <property type="entry name" value="DPBB_EXPB_N"/>
    <property type="match status" value="1"/>
</dbReference>
<dbReference type="Gene3D" id="2.60.40.760">
    <property type="entry name" value="Expansin, cellulose-binding-like domain"/>
    <property type="match status" value="1"/>
</dbReference>
<dbReference type="Gene3D" id="2.40.40.10">
    <property type="entry name" value="RlpA-like domain"/>
    <property type="match status" value="1"/>
</dbReference>
<dbReference type="InterPro" id="IPR007118">
    <property type="entry name" value="Expan_Lol_pI"/>
</dbReference>
<dbReference type="InterPro" id="IPR007112">
    <property type="entry name" value="Expansin/allergen_DPBB_dom"/>
</dbReference>
<dbReference type="InterPro" id="IPR007117">
    <property type="entry name" value="Expansin_CBD"/>
</dbReference>
<dbReference type="InterPro" id="IPR036749">
    <property type="entry name" value="Expansin_CBD_sf"/>
</dbReference>
<dbReference type="InterPro" id="IPR005795">
    <property type="entry name" value="LolPI"/>
</dbReference>
<dbReference type="InterPro" id="IPR009009">
    <property type="entry name" value="RlpA-like_DPBB"/>
</dbReference>
<dbReference type="InterPro" id="IPR036908">
    <property type="entry name" value="RlpA-like_sf"/>
</dbReference>
<dbReference type="PANTHER" id="PTHR31692">
    <property type="entry name" value="EXPANSIN-B3"/>
    <property type="match status" value="1"/>
</dbReference>
<dbReference type="PANTHER" id="PTHR31692:SF9">
    <property type="entry name" value="EXPANSIN-B4"/>
    <property type="match status" value="1"/>
</dbReference>
<dbReference type="Pfam" id="PF03330">
    <property type="entry name" value="DPBB_1"/>
    <property type="match status" value="1"/>
</dbReference>
<dbReference type="Pfam" id="PF01357">
    <property type="entry name" value="Expansin_C"/>
    <property type="match status" value="1"/>
</dbReference>
<dbReference type="PRINTS" id="PR01225">
    <property type="entry name" value="EXPANSNFAMLY"/>
</dbReference>
<dbReference type="PRINTS" id="PR00829">
    <property type="entry name" value="LOLP1ALLERGN"/>
</dbReference>
<dbReference type="SMART" id="SM00837">
    <property type="entry name" value="DPBB_1"/>
    <property type="match status" value="1"/>
</dbReference>
<dbReference type="SUPFAM" id="SSF50685">
    <property type="entry name" value="Barwin-like endoglucanases"/>
    <property type="match status" value="1"/>
</dbReference>
<dbReference type="SUPFAM" id="SSF49590">
    <property type="entry name" value="PHL pollen allergen"/>
    <property type="match status" value="1"/>
</dbReference>
<dbReference type="PROSITE" id="PS50843">
    <property type="entry name" value="EXPANSIN_CBD"/>
    <property type="match status" value="1"/>
</dbReference>
<dbReference type="PROSITE" id="PS50842">
    <property type="entry name" value="EXPANSIN_EG45"/>
    <property type="match status" value="1"/>
</dbReference>
<keyword id="KW-0134">Cell wall</keyword>
<keyword id="KW-0961">Cell wall biogenesis/degradation</keyword>
<keyword id="KW-1015">Disulfide bond</keyword>
<keyword id="KW-0325">Glycoprotein</keyword>
<keyword id="KW-0472">Membrane</keyword>
<keyword id="KW-1185">Reference proteome</keyword>
<keyword id="KW-0964">Secreted</keyword>
<keyword id="KW-0732">Signal</keyword>
<gene>
    <name type="primary">EXPB4</name>
    <name type="ordered locus">Os10g0556100</name>
    <name type="ordered locus">LOC_Os10g40730</name>
    <name evidence="8" type="ORF">OsJ_32421</name>
    <name type="ORF">OSJNBa0010C11.2</name>
</gene>
<protein>
    <recommendedName>
        <fullName>Expansin-B4</fullName>
    </recommendedName>
    <alternativeName>
        <fullName>Beta-expansin-4</fullName>
    </alternativeName>
    <alternativeName>
        <fullName>OsEXPB4</fullName>
    </alternativeName>
    <alternativeName>
        <fullName>OsaEXPb1.7</fullName>
    </alternativeName>
</protein>
<evidence type="ECO:0000250" key="1"/>
<evidence type="ECO:0000255" key="2"/>
<evidence type="ECO:0000255" key="3">
    <source>
        <dbReference type="PROSITE-ProRule" id="PRU00078"/>
    </source>
</evidence>
<evidence type="ECO:0000255" key="4">
    <source>
        <dbReference type="PROSITE-ProRule" id="PRU00079"/>
    </source>
</evidence>
<evidence type="ECO:0000269" key="5">
    <source>
    </source>
</evidence>
<evidence type="ECO:0000269" key="6">
    <source>
    </source>
</evidence>
<evidence type="ECO:0000305" key="7"/>
<evidence type="ECO:0000312" key="8">
    <source>
        <dbReference type="EMBL" id="EAZ16940.1"/>
    </source>
</evidence>
<comment type="function">
    <text evidence="1">May cause loosening and extension of plant cell walls by disrupting non-covalent bonding between cellulose microfibrils and matrix glucans. No enzymatic activity has been found. May be required for rapid internodal elongation in deepwater rice during submergence (By similarity).</text>
</comment>
<comment type="subcellular location">
    <subcellularLocation>
        <location evidence="1">Secreted</location>
        <location evidence="1">Cell wall</location>
    </subcellularLocation>
    <subcellularLocation>
        <location evidence="1">Membrane</location>
        <topology evidence="1">Peripheral membrane protein</topology>
    </subcellularLocation>
</comment>
<comment type="tissue specificity">
    <text evidence="5">Expressed in internodes.</text>
</comment>
<comment type="developmental stage">
    <text evidence="6">Expressed in the growing regions of roots, coleoptiles, internodes and leaves.</text>
</comment>
<comment type="induction">
    <text evidence="5">By gibberellin (GA3) and wounding.</text>
</comment>
<comment type="similarity">
    <text evidence="7">Belongs to the expansin family. Expansin B subfamily.</text>
</comment>
<comment type="online information" name="EXPANSIN homepage">
    <link uri="https://www.dept.psu.edu/biology/groups/expansins/index.htm"/>
</comment>